<comment type="function">
    <text>UDPGT is of major importance in the conjugation and subsequent elimination of potentially toxic xenobiotics and endogenous compounds.</text>
</comment>
<comment type="catalytic activity">
    <reaction>
        <text>glucuronate acceptor + UDP-alpha-D-glucuronate = acceptor beta-D-glucuronoside + UDP + H(+)</text>
        <dbReference type="Rhea" id="RHEA:21032"/>
        <dbReference type="ChEBI" id="CHEBI:15378"/>
        <dbReference type="ChEBI" id="CHEBI:58052"/>
        <dbReference type="ChEBI" id="CHEBI:58223"/>
        <dbReference type="ChEBI" id="CHEBI:132367"/>
        <dbReference type="ChEBI" id="CHEBI:132368"/>
        <dbReference type="EC" id="2.4.1.17"/>
    </reaction>
</comment>
<comment type="interaction">
    <interactant intactId="EBI-12891746">
        <id>O75310</id>
    </interactant>
    <interactant intactId="EBI-12092171">
        <id>Q12797-6</id>
        <label>ASPH</label>
    </interactant>
    <organismsDiffer>false</organismsDiffer>
    <experiments>3</experiments>
</comment>
<comment type="interaction">
    <interactant intactId="EBI-12891746">
        <id>O75310</id>
    </interactant>
    <interactant intactId="EBI-1045825">
        <id>P55061</id>
        <label>TMBIM6</label>
    </interactant>
    <organismsDiffer>false</organismsDiffer>
    <experiments>3</experiments>
</comment>
<comment type="subcellular location">
    <subcellularLocation>
        <location evidence="3">Microsome membrane</location>
        <topology evidence="3">Single-pass membrane protein</topology>
    </subcellularLocation>
    <subcellularLocation>
        <location evidence="3">Endoplasmic reticulum membrane</location>
        <topology evidence="3">Single-pass membrane protein</topology>
    </subcellularLocation>
</comment>
<comment type="tissue specificity">
    <text>Widely expressed.</text>
</comment>
<comment type="similarity">
    <text evidence="3">Belongs to the UDP-glycosyltransferase family.</text>
</comment>
<name>UDB11_HUMAN</name>
<feature type="signal peptide" evidence="2">
    <location>
        <begin position="1"/>
        <end position="21"/>
    </location>
</feature>
<feature type="chain" id="PRO_0000036035" description="UDP-glucuronosyltransferase 2B11">
    <location>
        <begin position="22"/>
        <end position="529"/>
    </location>
</feature>
<feature type="transmembrane region" description="Helical" evidence="2">
    <location>
        <begin position="493"/>
        <end position="513"/>
    </location>
</feature>
<feature type="modified residue" description="N6-succinyllysine" evidence="1">
    <location>
        <position position="135"/>
    </location>
</feature>
<feature type="glycosylation site" description="N-linked (GlcNAc...) asparagine" evidence="2">
    <location>
        <position position="315"/>
    </location>
</feature>
<proteinExistence type="evidence at protein level"/>
<protein>
    <recommendedName>
        <fullName>UDP-glucuronosyltransferase 2B11</fullName>
        <shortName>UDPGT 2B11</shortName>
        <ecNumber>2.4.1.17</ecNumber>
    </recommendedName>
</protein>
<gene>
    <name type="primary">UGT2B11</name>
</gene>
<reference key="1">
    <citation type="journal article" date="1998" name="Biochem. Biophys. Res. Commun.">
        <title>Isolation and characterization of a human orphan UDP-glucuronosyltransferase, UGT2B11.</title>
        <authorList>
            <person name="Beaulieu M."/>
            <person name="Levesque E."/>
            <person name="Hum D.W."/>
            <person name="Belanger A."/>
        </authorList>
    </citation>
    <scope>NUCLEOTIDE SEQUENCE [MRNA]</scope>
</reference>
<reference key="2">
    <citation type="journal article" date="2004" name="Genome Res.">
        <title>The status, quality, and expansion of the NIH full-length cDNA project: the Mammalian Gene Collection (MGC).</title>
        <authorList>
            <consortium name="The MGC Project Team"/>
        </authorList>
    </citation>
    <scope>NUCLEOTIDE SEQUENCE [LARGE SCALE MRNA]</scope>
</reference>
<dbReference type="EC" id="2.4.1.17"/>
<dbReference type="EMBL" id="AF016492">
    <property type="protein sequence ID" value="AAC27891.1"/>
    <property type="molecule type" value="mRNA"/>
</dbReference>
<dbReference type="EMBL" id="BC069441">
    <property type="protein sequence ID" value="AAH69441.1"/>
    <property type="molecule type" value="mRNA"/>
</dbReference>
<dbReference type="EMBL" id="BC107059">
    <property type="protein sequence ID" value="AAI07060.1"/>
    <property type="molecule type" value="mRNA"/>
</dbReference>
<dbReference type="EMBL" id="BC107060">
    <property type="protein sequence ID" value="AAI07061.1"/>
    <property type="molecule type" value="mRNA"/>
</dbReference>
<dbReference type="CCDS" id="CCDS3527.1"/>
<dbReference type="PIR" id="JE0200">
    <property type="entry name" value="JE0200"/>
</dbReference>
<dbReference type="RefSeq" id="NP_001064.1">
    <property type="nucleotide sequence ID" value="NM_001073.3"/>
</dbReference>
<dbReference type="SMR" id="O75310"/>
<dbReference type="BioGRID" id="115945">
    <property type="interactions" value="6"/>
</dbReference>
<dbReference type="FunCoup" id="O75310">
    <property type="interactions" value="323"/>
</dbReference>
<dbReference type="IntAct" id="O75310">
    <property type="interactions" value="3"/>
</dbReference>
<dbReference type="STRING" id="9606.ENSP00000387683"/>
<dbReference type="ChEMBL" id="CHEMBL4523985"/>
<dbReference type="CAZy" id="GT1">
    <property type="family name" value="Glycosyltransferase Family 1"/>
</dbReference>
<dbReference type="GlyCosmos" id="O75310">
    <property type="glycosylation" value="1 site, No reported glycans"/>
</dbReference>
<dbReference type="GlyGen" id="O75310">
    <property type="glycosylation" value="1 site"/>
</dbReference>
<dbReference type="iPTMnet" id="O75310"/>
<dbReference type="PhosphoSitePlus" id="O75310"/>
<dbReference type="BioMuta" id="UGT2B11"/>
<dbReference type="jPOST" id="O75310"/>
<dbReference type="MassIVE" id="O75310"/>
<dbReference type="PaxDb" id="9606-ENSP00000387683"/>
<dbReference type="PeptideAtlas" id="O75310"/>
<dbReference type="ProteomicsDB" id="49886"/>
<dbReference type="Antibodypedia" id="57751">
    <property type="antibodies" value="54 antibodies from 12 providers"/>
</dbReference>
<dbReference type="DNASU" id="10720"/>
<dbReference type="Ensembl" id="ENST00000446444.2">
    <property type="protein sequence ID" value="ENSP00000387683.1"/>
    <property type="gene ID" value="ENSG00000213759.10"/>
</dbReference>
<dbReference type="GeneID" id="10720"/>
<dbReference type="KEGG" id="hsa:10720"/>
<dbReference type="MANE-Select" id="ENST00000446444.2">
    <property type="protein sequence ID" value="ENSP00000387683.1"/>
    <property type="RefSeq nucleotide sequence ID" value="NM_001073.3"/>
    <property type="RefSeq protein sequence ID" value="NP_001064.1"/>
</dbReference>
<dbReference type="UCSC" id="uc003heh.5">
    <property type="organism name" value="human"/>
</dbReference>
<dbReference type="AGR" id="HGNC:12545"/>
<dbReference type="CTD" id="10720"/>
<dbReference type="DisGeNET" id="10720"/>
<dbReference type="GeneCards" id="UGT2B11"/>
<dbReference type="HGNC" id="HGNC:12545">
    <property type="gene designation" value="UGT2B11"/>
</dbReference>
<dbReference type="HPA" id="ENSG00000213759">
    <property type="expression patterns" value="Tissue enriched (breast)"/>
</dbReference>
<dbReference type="MIM" id="603064">
    <property type="type" value="gene"/>
</dbReference>
<dbReference type="neXtProt" id="NX_O75310"/>
<dbReference type="OpenTargets" id="ENSG00000213759"/>
<dbReference type="PharmGKB" id="PA37187"/>
<dbReference type="VEuPathDB" id="HostDB:ENSG00000213759"/>
<dbReference type="eggNOG" id="KOG1192">
    <property type="taxonomic scope" value="Eukaryota"/>
</dbReference>
<dbReference type="GeneTree" id="ENSGT00940000165281"/>
<dbReference type="HOGENOM" id="CLU_012949_0_2_1"/>
<dbReference type="InParanoid" id="O75310"/>
<dbReference type="OMA" id="PAKDWDP"/>
<dbReference type="OrthoDB" id="9473804at2759"/>
<dbReference type="PAN-GO" id="O75310">
    <property type="GO annotations" value="3 GO annotations based on evolutionary models"/>
</dbReference>
<dbReference type="PhylomeDB" id="O75310"/>
<dbReference type="TreeFam" id="TF315472"/>
<dbReference type="BRENDA" id="2.4.1.17">
    <property type="organism ID" value="2681"/>
</dbReference>
<dbReference type="PathwayCommons" id="O75310"/>
<dbReference type="Reactome" id="R-HSA-156588">
    <property type="pathway name" value="Glucuronidation"/>
</dbReference>
<dbReference type="Reactome" id="R-HSA-9749641">
    <property type="pathway name" value="Aspirin ADME"/>
</dbReference>
<dbReference type="SignaLink" id="O75310"/>
<dbReference type="BioGRID-ORCS" id="10720">
    <property type="hits" value="24 hits in 1048 CRISPR screens"/>
</dbReference>
<dbReference type="ChiTaRS" id="UGT2B11">
    <property type="organism name" value="human"/>
</dbReference>
<dbReference type="GenomeRNAi" id="10720"/>
<dbReference type="Pharos" id="O75310">
    <property type="development level" value="Tbio"/>
</dbReference>
<dbReference type="PRO" id="PR:O75310"/>
<dbReference type="Proteomes" id="UP000005640">
    <property type="component" value="Chromosome 4"/>
</dbReference>
<dbReference type="RNAct" id="O75310">
    <property type="molecule type" value="protein"/>
</dbReference>
<dbReference type="Bgee" id="ENSG00000213759">
    <property type="expression patterns" value="Expressed in male germ line stem cell (sensu Vertebrata) in testis and 44 other cell types or tissues"/>
</dbReference>
<dbReference type="GO" id="GO:0005789">
    <property type="term" value="C:endoplasmic reticulum membrane"/>
    <property type="evidence" value="ECO:0007669"/>
    <property type="project" value="UniProtKB-SubCell"/>
</dbReference>
<dbReference type="GO" id="GO:0015020">
    <property type="term" value="F:glucuronosyltransferase activity"/>
    <property type="evidence" value="ECO:0000314"/>
    <property type="project" value="UniProtKB"/>
</dbReference>
<dbReference type="GO" id="GO:0008210">
    <property type="term" value="P:estrogen metabolic process"/>
    <property type="evidence" value="ECO:0000314"/>
    <property type="project" value="UniProtKB"/>
</dbReference>
<dbReference type="GO" id="GO:0006805">
    <property type="term" value="P:xenobiotic metabolic process"/>
    <property type="evidence" value="ECO:0000304"/>
    <property type="project" value="ProtInc"/>
</dbReference>
<dbReference type="CDD" id="cd03784">
    <property type="entry name" value="GT1_Gtf-like"/>
    <property type="match status" value="1"/>
</dbReference>
<dbReference type="FunFam" id="3.40.50.2000:FF:000001">
    <property type="entry name" value="UDP-glucuronosyltransferase"/>
    <property type="match status" value="1"/>
</dbReference>
<dbReference type="FunFam" id="3.40.50.2000:FF:000081">
    <property type="entry name" value="UDP-glucuronosyltransferase 2A2"/>
    <property type="match status" value="1"/>
</dbReference>
<dbReference type="Gene3D" id="3.40.50.2000">
    <property type="entry name" value="Glycogen Phosphorylase B"/>
    <property type="match status" value="2"/>
</dbReference>
<dbReference type="InterPro" id="IPR050271">
    <property type="entry name" value="UDP-glycosyltransferase"/>
</dbReference>
<dbReference type="InterPro" id="IPR002213">
    <property type="entry name" value="UDP_glucos_trans"/>
</dbReference>
<dbReference type="InterPro" id="IPR035595">
    <property type="entry name" value="UDP_glycos_trans_CS"/>
</dbReference>
<dbReference type="PANTHER" id="PTHR48043">
    <property type="entry name" value="EG:EG0003.4 PROTEIN-RELATED"/>
    <property type="match status" value="1"/>
</dbReference>
<dbReference type="PANTHER" id="PTHR48043:SF86">
    <property type="entry name" value="UDP-GLUCURONOSYLTRANSFERASE 2B10-RELATED"/>
    <property type="match status" value="1"/>
</dbReference>
<dbReference type="Pfam" id="PF00201">
    <property type="entry name" value="UDPGT"/>
    <property type="match status" value="1"/>
</dbReference>
<dbReference type="SUPFAM" id="SSF53756">
    <property type="entry name" value="UDP-Glycosyltransferase/glycogen phosphorylase"/>
    <property type="match status" value="1"/>
</dbReference>
<dbReference type="PROSITE" id="PS00375">
    <property type="entry name" value="UDPGT"/>
    <property type="match status" value="1"/>
</dbReference>
<sequence>MTLKWTSVLLLIHLSCYFSSGSCGKVLVWAAEYSHWMNMKTILKELVQRGHEVTVLASSASILFDPNDASTLKFEVYPTSLTKTEFENIIMQQVKRWSDIRKDSFWLYFSQEQEILWELYDIFRNFCKDVVSNKKVMKKLQESRFDIVFADAVFPCGELLAALLNIRFVYSLRFTPGYTIERHSGGLIFPPSYIPIVMSKLSDQMTFMERVKNMIYVLYFDFWFQMSDMKKWDQFYSEVLGRPTTLFETMGKADIWLMRNSWSFQFPHPFLPNVDFVGGFHCKPAKPLPKEMEEFVQSSGENGVVVFSLGSVISNMTAERANVIATALAKIPQKVLWRFDGNKPDALGLNTRLYKWIPQNDLLGHPKTRAFITHGGANGIYEAIYHGIPMVGIPLFFDQPDNIAHMKAKGAAVRLDFNTMSSTDLLNALKTVINDPLYKENIMKLSRIQHDQPVKPLDRAVFWIEFVMPHKGAKHLRVAAHDLTWFQYHSLDVIGFLLACVATVIFIITKFCLFCFWKFARKGKKGKRD</sequence>
<accession>O75310</accession>
<accession>Q3KNV9</accession>
<keyword id="KW-0256">Endoplasmic reticulum</keyword>
<keyword id="KW-0325">Glycoprotein</keyword>
<keyword id="KW-0328">Glycosyltransferase</keyword>
<keyword id="KW-0472">Membrane</keyword>
<keyword id="KW-0492">Microsome</keyword>
<keyword id="KW-1267">Proteomics identification</keyword>
<keyword id="KW-1185">Reference proteome</keyword>
<keyword id="KW-0732">Signal</keyword>
<keyword id="KW-0808">Transferase</keyword>
<keyword id="KW-0812">Transmembrane</keyword>
<keyword id="KW-1133">Transmembrane helix</keyword>
<organism>
    <name type="scientific">Homo sapiens</name>
    <name type="common">Human</name>
    <dbReference type="NCBI Taxonomy" id="9606"/>
    <lineage>
        <taxon>Eukaryota</taxon>
        <taxon>Metazoa</taxon>
        <taxon>Chordata</taxon>
        <taxon>Craniata</taxon>
        <taxon>Vertebrata</taxon>
        <taxon>Euteleostomi</taxon>
        <taxon>Mammalia</taxon>
        <taxon>Eutheria</taxon>
        <taxon>Euarchontoglires</taxon>
        <taxon>Primates</taxon>
        <taxon>Haplorrhini</taxon>
        <taxon>Catarrhini</taxon>
        <taxon>Hominidae</taxon>
        <taxon>Homo</taxon>
    </lineage>
</organism>
<evidence type="ECO:0000250" key="1">
    <source>
        <dbReference type="UniProtKB" id="Q8BWQ1"/>
    </source>
</evidence>
<evidence type="ECO:0000255" key="2"/>
<evidence type="ECO:0000305" key="3"/>